<accession>O29399</accession>
<reference key="1">
    <citation type="journal article" date="1997" name="Nature">
        <title>The complete genome sequence of the hyperthermophilic, sulphate-reducing archaeon Archaeoglobus fulgidus.</title>
        <authorList>
            <person name="Klenk H.-P."/>
            <person name="Clayton R.A."/>
            <person name="Tomb J.-F."/>
            <person name="White O."/>
            <person name="Nelson K.E."/>
            <person name="Ketchum K.A."/>
            <person name="Dodson R.J."/>
            <person name="Gwinn M.L."/>
            <person name="Hickey E.K."/>
            <person name="Peterson J.D."/>
            <person name="Richardson D.L."/>
            <person name="Kerlavage A.R."/>
            <person name="Graham D.E."/>
            <person name="Kyrpides N.C."/>
            <person name="Fleischmann R.D."/>
            <person name="Quackenbush J."/>
            <person name="Lee N.H."/>
            <person name="Sutton G.G."/>
            <person name="Gill S.R."/>
            <person name="Kirkness E.F."/>
            <person name="Dougherty B.A."/>
            <person name="McKenney K."/>
            <person name="Adams M.D."/>
            <person name="Loftus B.J."/>
            <person name="Peterson S.N."/>
            <person name="Reich C.I."/>
            <person name="McNeil L.K."/>
            <person name="Badger J.H."/>
            <person name="Glodek A."/>
            <person name="Zhou L."/>
            <person name="Overbeek R."/>
            <person name="Gocayne J.D."/>
            <person name="Weidman J.F."/>
            <person name="McDonald L.A."/>
            <person name="Utterback T.R."/>
            <person name="Cotton M.D."/>
            <person name="Spriggs T."/>
            <person name="Artiach P."/>
            <person name="Kaine B.P."/>
            <person name="Sykes S.M."/>
            <person name="Sadow P.W."/>
            <person name="D'Andrea K.P."/>
            <person name="Bowman C."/>
            <person name="Fujii C."/>
            <person name="Garland S.A."/>
            <person name="Mason T.M."/>
            <person name="Olsen G.J."/>
            <person name="Fraser C.M."/>
            <person name="Smith H.O."/>
            <person name="Woese C.R."/>
            <person name="Venter J.C."/>
        </authorList>
    </citation>
    <scope>NUCLEOTIDE SEQUENCE [LARGE SCALE GENOMIC DNA]</scope>
    <source>
        <strain>ATCC 49558 / DSM 4304 / JCM 9628 / NBRC 100126 / VC-16</strain>
    </source>
</reference>
<proteinExistence type="inferred from homology"/>
<dbReference type="EC" id="6.5.1.8" evidence="1"/>
<dbReference type="EMBL" id="AE000782">
    <property type="protein sequence ID" value="AAB90372.1"/>
    <property type="molecule type" value="Genomic_DNA"/>
</dbReference>
<dbReference type="PIR" id="F69357">
    <property type="entry name" value="F69357"/>
</dbReference>
<dbReference type="SMR" id="O29399"/>
<dbReference type="STRING" id="224325.AF_0862"/>
<dbReference type="PaxDb" id="224325-AF_0862"/>
<dbReference type="EnsemblBacteria" id="AAB90372">
    <property type="protein sequence ID" value="AAB90372"/>
    <property type="gene ID" value="AF_0862"/>
</dbReference>
<dbReference type="KEGG" id="afu:AF_0862"/>
<dbReference type="eggNOG" id="arCOG04246">
    <property type="taxonomic scope" value="Archaea"/>
</dbReference>
<dbReference type="HOGENOM" id="CLU_022279_0_1_2"/>
<dbReference type="PhylomeDB" id="O29399"/>
<dbReference type="Proteomes" id="UP000002199">
    <property type="component" value="Chromosome"/>
</dbReference>
<dbReference type="GO" id="GO:0005525">
    <property type="term" value="F:GTP binding"/>
    <property type="evidence" value="ECO:0007669"/>
    <property type="project" value="UniProtKB-KW"/>
</dbReference>
<dbReference type="GO" id="GO:0046872">
    <property type="term" value="F:metal ion binding"/>
    <property type="evidence" value="ECO:0007669"/>
    <property type="project" value="UniProtKB-KW"/>
</dbReference>
<dbReference type="GO" id="GO:0003972">
    <property type="term" value="F:RNA ligase (ATP) activity"/>
    <property type="evidence" value="ECO:0007669"/>
    <property type="project" value="TreeGrafter"/>
</dbReference>
<dbReference type="GO" id="GO:0170057">
    <property type="term" value="F:RNA ligase (GTP) activity"/>
    <property type="evidence" value="ECO:0007669"/>
    <property type="project" value="UniProtKB-EC"/>
</dbReference>
<dbReference type="GO" id="GO:0008033">
    <property type="term" value="P:tRNA processing"/>
    <property type="evidence" value="ECO:0007669"/>
    <property type="project" value="UniProtKB-KW"/>
</dbReference>
<dbReference type="FunFam" id="3.90.1860.10:FF:000001">
    <property type="entry name" value="tRNA-splicing ligase RtcB homolog"/>
    <property type="match status" value="1"/>
</dbReference>
<dbReference type="Gene3D" id="3.90.1860.10">
    <property type="entry name" value="tRNA-splicing ligase RtcB"/>
    <property type="match status" value="1"/>
</dbReference>
<dbReference type="InterPro" id="IPR001233">
    <property type="entry name" value="RtcB"/>
</dbReference>
<dbReference type="InterPro" id="IPR036025">
    <property type="entry name" value="RtcB-like_sf"/>
</dbReference>
<dbReference type="PANTHER" id="PTHR11118">
    <property type="entry name" value="RNA-SPLICING LIGASE RTCB HOMOLOG"/>
    <property type="match status" value="1"/>
</dbReference>
<dbReference type="PANTHER" id="PTHR11118:SF1">
    <property type="entry name" value="RNA-SPLICING LIGASE RTCB HOMOLOG"/>
    <property type="match status" value="1"/>
</dbReference>
<dbReference type="Pfam" id="PF01139">
    <property type="entry name" value="RtcB"/>
    <property type="match status" value="1"/>
</dbReference>
<dbReference type="SUPFAM" id="SSF103365">
    <property type="entry name" value="Hypothetical protein PH1602"/>
    <property type="match status" value="1"/>
</dbReference>
<protein>
    <recommendedName>
        <fullName evidence="1">tRNA-splicing ligase RtcB</fullName>
        <ecNumber evidence="1">6.5.1.8</ecNumber>
    </recommendedName>
    <alternativeName>
        <fullName evidence="1">3'-phosphate/5'-hydroxy nucleic acid ligase</fullName>
    </alternativeName>
</protein>
<gene>
    <name type="primary">rtcB</name>
    <name type="ordered locus">AF_0862</name>
</gene>
<organism>
    <name type="scientific">Archaeoglobus fulgidus (strain ATCC 49558 / DSM 4304 / JCM 9628 / NBRC 100126 / VC-16)</name>
    <dbReference type="NCBI Taxonomy" id="224325"/>
    <lineage>
        <taxon>Archaea</taxon>
        <taxon>Methanobacteriati</taxon>
        <taxon>Methanobacteriota</taxon>
        <taxon>Archaeoglobi</taxon>
        <taxon>Archaeoglobales</taxon>
        <taxon>Archaeoglobaceae</taxon>
        <taxon>Archaeoglobus</taxon>
    </lineage>
</organism>
<evidence type="ECO:0000250" key="1">
    <source>
        <dbReference type="UniProtKB" id="O59245"/>
    </source>
</evidence>
<evidence type="ECO:0000305" key="2"/>
<keyword id="KW-0342">GTP-binding</keyword>
<keyword id="KW-0436">Ligase</keyword>
<keyword id="KW-0464">Manganese</keyword>
<keyword id="KW-0479">Metal-binding</keyword>
<keyword id="KW-0547">Nucleotide-binding</keyword>
<keyword id="KW-1185">Reference proteome</keyword>
<keyword id="KW-0819">tRNA processing</keyword>
<name>RTCB_ARCFU</name>
<sequence length="482" mass="53025">MNMEGILKKITDYKWELPKSYKPGMRVPAYFYISRKLMQILEKDAVEQAANVATMPGIQVASLVMPDVHVGYGFPIGGVAGFDVNEGVVSPGGVGFDINCGVRLLRSNLNVEDVKPLIKKLIDELFVAVPSGVGSEGRLRVSDRELDEIFVEGARWAVENGYGYERDLKHCEEEGALEGARPEVVSKKARDRGRPQLGTLGSGNHFLEVQYVDKVFDEKVAAKFGIEEGMVTVMIHCGSRGLGHQVCTDFLEVLDRAVKKYGIKLPDRQLACAPINSKEGQDYFAGMAASANYAWCNRQIIAHWVRETFQKVMGMSEDDLGMELVYDVAHNIAKFEEHRVDGKKMKLCVHRKGATRAFGPGLKEVPEDYRDVGQPVLIPGSMGTPSYILVGTEKAMEETFGSTCHGSGRVMSRAAAKRKLRGNVVKQNLERKGIYVRATHGALLAEEAPEAYKLSDDVVDVVHRAGISKLVARLRPLGVAKG</sequence>
<comment type="function">
    <text evidence="1">Essential for tRNA splicing and maturation. Acts by directly joining spliced tRNA halves to mature-sized tRNAs. Joins RNA with 2',3'-cyclic-phosphate or 3'-phosphate ends to RNA with 5'-hydroxy ends.</text>
</comment>
<comment type="catalytic activity">
    <reaction evidence="1">
        <text>a 3'-end 3'-phospho-ribonucleotide-RNA + a 5'-end dephospho-ribonucleoside-RNA + GTP = a ribonucleotidyl-ribonucleotide-RNA + GMP + diphosphate</text>
        <dbReference type="Rhea" id="RHEA:68076"/>
        <dbReference type="Rhea" id="RHEA-COMP:10463"/>
        <dbReference type="Rhea" id="RHEA-COMP:13936"/>
        <dbReference type="Rhea" id="RHEA-COMP:17355"/>
        <dbReference type="ChEBI" id="CHEBI:33019"/>
        <dbReference type="ChEBI" id="CHEBI:37565"/>
        <dbReference type="ChEBI" id="CHEBI:58115"/>
        <dbReference type="ChEBI" id="CHEBI:83062"/>
        <dbReference type="ChEBI" id="CHEBI:138284"/>
        <dbReference type="ChEBI" id="CHEBI:173118"/>
        <dbReference type="EC" id="6.5.1.8"/>
    </reaction>
</comment>
<comment type="catalytic activity">
    <reaction evidence="1">
        <text>a 3'-end 2',3'-cyclophospho-ribonucleotide-RNA + a 5'-end dephospho-ribonucleoside-RNA + GTP + H2O = a ribonucleotidyl-ribonucleotide-RNA + GMP + diphosphate + H(+)</text>
        <dbReference type="Rhea" id="RHEA:68080"/>
        <dbReference type="Rhea" id="RHEA-COMP:10464"/>
        <dbReference type="Rhea" id="RHEA-COMP:13936"/>
        <dbReference type="Rhea" id="RHEA-COMP:17355"/>
        <dbReference type="ChEBI" id="CHEBI:15377"/>
        <dbReference type="ChEBI" id="CHEBI:15378"/>
        <dbReference type="ChEBI" id="CHEBI:33019"/>
        <dbReference type="ChEBI" id="CHEBI:37565"/>
        <dbReference type="ChEBI" id="CHEBI:58115"/>
        <dbReference type="ChEBI" id="CHEBI:83064"/>
        <dbReference type="ChEBI" id="CHEBI:138284"/>
        <dbReference type="ChEBI" id="CHEBI:173118"/>
        <dbReference type="EC" id="6.5.1.8"/>
    </reaction>
</comment>
<comment type="cofactor">
    <cofactor evidence="1">
        <name>Mn(2+)</name>
        <dbReference type="ChEBI" id="CHEBI:29035"/>
    </cofactor>
    <text evidence="1">Binds 2 manganese ions per subunit.</text>
</comment>
<comment type="subunit">
    <text evidence="1">Monomer.</text>
</comment>
<comment type="miscellaneous">
    <text evidence="1">Ligation proceeds through 3 nucleotidyl transfer steps, with 2',3'-cyclic phosphate termini being hydrolyzed to 3'-P termini in a step that precedes 3'-P activation with GMP. In the first nucleotidyl transfer step, RtcB reacts with GTP to form a covalent RtcB-histidine-GMP intermediate with release of PPi; in the second step, the GMP moiety is transferred to the RNA 3'-P; in the third step, the 5'-OH from the opposite RNA strand attacks the activated 3'-P to form a 3',5'-phosphodiester bond and release GMP.</text>
</comment>
<comment type="similarity">
    <text evidence="2">Belongs to the RtcB family.</text>
</comment>
<feature type="chain" id="PRO_0000232539" description="tRNA-splicing ligase RtcB">
    <location>
        <begin position="1"/>
        <end position="482"/>
    </location>
</feature>
<feature type="active site" description="GMP-histidine intermediate" evidence="1">
    <location>
        <position position="405"/>
    </location>
</feature>
<feature type="binding site" evidence="1">
    <location>
        <position position="97"/>
    </location>
    <ligand>
        <name>Mn(2+)</name>
        <dbReference type="ChEBI" id="CHEBI:29035"/>
        <label>1</label>
    </ligand>
</feature>
<feature type="binding site" evidence="1">
    <location>
        <position position="100"/>
    </location>
    <ligand>
        <name>Mn(2+)</name>
        <dbReference type="ChEBI" id="CHEBI:29035"/>
        <label>1</label>
    </ligand>
</feature>
<feature type="binding site" evidence="1">
    <location>
        <position position="100"/>
    </location>
    <ligand>
        <name>Mn(2+)</name>
        <dbReference type="ChEBI" id="CHEBI:29035"/>
        <label>2</label>
    </ligand>
</feature>
<feature type="binding site" evidence="1">
    <location>
        <begin position="204"/>
        <end position="208"/>
    </location>
    <ligand>
        <name>GMP</name>
        <dbReference type="ChEBI" id="CHEBI:58115"/>
    </ligand>
</feature>
<feature type="binding site" evidence="1">
    <location>
        <position position="205"/>
    </location>
    <ligand>
        <name>Mn(2+)</name>
        <dbReference type="ChEBI" id="CHEBI:29035"/>
        <label>1</label>
    </ligand>
</feature>
<feature type="binding site" evidence="1">
    <location>
        <position position="236"/>
    </location>
    <ligand>
        <name>Mn(2+)</name>
        <dbReference type="ChEBI" id="CHEBI:29035"/>
        <label>2</label>
    </ligand>
</feature>
<feature type="binding site" evidence="1">
    <location>
        <begin position="330"/>
        <end position="331"/>
    </location>
    <ligand>
        <name>GMP</name>
        <dbReference type="ChEBI" id="CHEBI:58115"/>
    </ligand>
</feature>
<feature type="binding site" evidence="1">
    <location>
        <position position="330"/>
    </location>
    <ligand>
        <name>Mn(2+)</name>
        <dbReference type="ChEBI" id="CHEBI:29035"/>
        <label>2</label>
    </ligand>
</feature>
<feature type="binding site" evidence="1">
    <location>
        <begin position="379"/>
        <end position="382"/>
    </location>
    <ligand>
        <name>GMP</name>
        <dbReference type="ChEBI" id="CHEBI:58115"/>
    </ligand>
</feature>
<feature type="binding site" evidence="1">
    <location>
        <position position="386"/>
    </location>
    <ligand>
        <name>GMP</name>
        <dbReference type="ChEBI" id="CHEBI:58115"/>
    </ligand>
</feature>
<feature type="binding site" evidence="1">
    <location>
        <begin position="405"/>
        <end position="408"/>
    </location>
    <ligand>
        <name>GMP</name>
        <dbReference type="ChEBI" id="CHEBI:58115"/>
    </ligand>
</feature>
<feature type="binding site" evidence="1">
    <location>
        <position position="481"/>
    </location>
    <ligand>
        <name>GMP</name>
        <dbReference type="ChEBI" id="CHEBI:58115"/>
    </ligand>
</feature>